<accession>Q03721</accession>
<accession>Q3MIM4</accession>
<accession>Q5TBI6</accession>
<comment type="function">
    <text evidence="6">Voltage-gated potassium channel that opens in response to the voltage difference across the membrane, forming a potassium-selective channel through which potassium ions pass in accordance with their electrochemical gradient (PubMed:7993631). The channel displays rapid activation and inactivation kinetics (PubMed:7993631).</text>
</comment>
<comment type="catalytic activity">
    <reaction evidence="6">
        <text>K(+)(in) = K(+)(out)</text>
        <dbReference type="Rhea" id="RHEA:29463"/>
        <dbReference type="ChEBI" id="CHEBI:29103"/>
    </reaction>
</comment>
<comment type="subunit">
    <text evidence="3 10">Homotetramer (Probable). Heterotetramer of potassium channel proteins (By similarity).</text>
</comment>
<comment type="interaction">
    <interactant intactId="EBI-11334865">
        <id>Q03721</id>
    </interactant>
    <interactant intactId="EBI-2433139">
        <id>P56817</id>
        <label>BACE1</label>
    </interactant>
    <organismsDiffer>false</organismsDiffer>
    <experiments>3</experiments>
</comment>
<comment type="subcellular location">
    <subcellularLocation>
        <location>Membrane</location>
        <topology>Multi-pass membrane protein</topology>
    </subcellularLocation>
</comment>
<comment type="alternative products">
    <event type="alternative splicing"/>
    <isoform>
        <id>Q03721-1</id>
        <name>1</name>
        <sequence type="displayed"/>
    </isoform>
    <isoform>
        <id>Q03721-2</id>
        <name>2</name>
        <sequence type="described" ref="VSP_020581 VSP_020582"/>
    </isoform>
    <isoform>
        <id>Q03721-3</id>
        <name>3</name>
        <sequence type="described" ref="VSP_040033"/>
    </isoform>
</comment>
<comment type="domain">
    <text evidence="6">The cytoplasmic N-terminus mediates N-type inactivation.</text>
</comment>
<comment type="domain">
    <text evidence="3">Composed of the tetramerization T1 domain, six membrane spanning regions including voltage-sensing (S1-S4) and pore domains (S5- S6) and a variable C-terminal domain.</text>
</comment>
<comment type="PTM">
    <text evidence="6 7">Phosphorylation of serine residues in the inactivation gate inhibits rapid channel closure.</text>
</comment>
<comment type="miscellaneous">
    <molecule>Isoform 2</molecule>
    <text evidence="10">Could be a cloning artifact.</text>
</comment>
<comment type="similarity">
    <text evidence="10">Belongs to the potassium channel family. C (Shaw) (TC 1.A.1.2) subfamily. Kv3.4/KCNC4 sub-subfamily.</text>
</comment>
<dbReference type="EMBL" id="M64676">
    <property type="protein sequence ID" value="AAA57263.1"/>
    <property type="molecule type" value="mRNA"/>
</dbReference>
<dbReference type="EMBL" id="AL137790">
    <property type="status" value="NOT_ANNOTATED_CDS"/>
    <property type="molecule type" value="Genomic_DNA"/>
</dbReference>
<dbReference type="EMBL" id="BC019010">
    <property type="status" value="NOT_ANNOTATED_CDS"/>
    <property type="molecule type" value="mRNA"/>
</dbReference>
<dbReference type="EMBL" id="BC101769">
    <property type="protein sequence ID" value="AAI01770.1"/>
    <property type="molecule type" value="mRNA"/>
</dbReference>
<dbReference type="CCDS" id="CCDS44193.1">
    <molecule id="Q03721-3"/>
</dbReference>
<dbReference type="CCDS" id="CCDS821.1">
    <molecule id="Q03721-1"/>
</dbReference>
<dbReference type="RefSeq" id="NP_001034663.1">
    <molecule id="Q03721-3"/>
    <property type="nucleotide sequence ID" value="NM_001039574.3"/>
</dbReference>
<dbReference type="RefSeq" id="NP_004969.2">
    <molecule id="Q03721-1"/>
    <property type="nucleotide sequence ID" value="NM_004978.4"/>
</dbReference>
<dbReference type="PDB" id="1B4G">
    <property type="method" value="NMR"/>
    <property type="chains" value="A=1-30"/>
</dbReference>
<dbReference type="PDB" id="1B4I">
    <property type="method" value="NMR"/>
    <property type="chains" value="A=1-30"/>
</dbReference>
<dbReference type="PDB" id="1ZTN">
    <property type="method" value="NMR"/>
    <property type="chains" value="A=1-30"/>
</dbReference>
<dbReference type="PDBsum" id="1B4G"/>
<dbReference type="PDBsum" id="1B4I"/>
<dbReference type="PDBsum" id="1ZTN"/>
<dbReference type="SMR" id="Q03721"/>
<dbReference type="BioGRID" id="109951">
    <property type="interactions" value="37"/>
</dbReference>
<dbReference type="FunCoup" id="Q03721">
    <property type="interactions" value="206"/>
</dbReference>
<dbReference type="IntAct" id="Q03721">
    <property type="interactions" value="33"/>
</dbReference>
<dbReference type="STRING" id="9606.ENSP00000358802"/>
<dbReference type="ChEMBL" id="CHEMBL2362996"/>
<dbReference type="DrugBank" id="DB04522">
    <property type="generic name" value="Dexfosfoserine"/>
</dbReference>
<dbReference type="DrugBank" id="DB00228">
    <property type="generic name" value="Enflurane"/>
</dbReference>
<dbReference type="DrugBank" id="DB01110">
    <property type="generic name" value="Miconazole"/>
</dbReference>
<dbReference type="DrugBank" id="DB01069">
    <property type="generic name" value="Promethazine"/>
</dbReference>
<dbReference type="DrugCentral" id="Q03721"/>
<dbReference type="GlyCosmos" id="Q03721">
    <property type="glycosylation" value="2 sites, No reported glycans"/>
</dbReference>
<dbReference type="GlyGen" id="Q03721">
    <property type="glycosylation" value="3 sites, 2 N-linked glycans (2 sites)"/>
</dbReference>
<dbReference type="iPTMnet" id="Q03721"/>
<dbReference type="PhosphoSitePlus" id="Q03721"/>
<dbReference type="BioMuta" id="KCNC4"/>
<dbReference type="DMDM" id="66774206"/>
<dbReference type="jPOST" id="Q03721"/>
<dbReference type="MassIVE" id="Q03721"/>
<dbReference type="PaxDb" id="9606-ENSP00000358802"/>
<dbReference type="PeptideAtlas" id="Q03721"/>
<dbReference type="ProteomicsDB" id="58220">
    <molecule id="Q03721-1"/>
</dbReference>
<dbReference type="ProteomicsDB" id="58221">
    <molecule id="Q03721-2"/>
</dbReference>
<dbReference type="ProteomicsDB" id="58222">
    <molecule id="Q03721-3"/>
</dbReference>
<dbReference type="TopDownProteomics" id="Q03721-3">
    <molecule id="Q03721-3"/>
</dbReference>
<dbReference type="ABCD" id="Q03721">
    <property type="antibodies" value="1 sequenced antibody"/>
</dbReference>
<dbReference type="Antibodypedia" id="3094">
    <property type="antibodies" value="320 antibodies from 31 providers"/>
</dbReference>
<dbReference type="DNASU" id="3749"/>
<dbReference type="Ensembl" id="ENST00000369787.7">
    <molecule id="Q03721-1"/>
    <property type="protein sequence ID" value="ENSP00000358802.3"/>
    <property type="gene ID" value="ENSG00000116396.15"/>
</dbReference>
<dbReference type="Ensembl" id="ENST00000438661.3">
    <molecule id="Q03721-3"/>
    <property type="protein sequence ID" value="ENSP00000393655.2"/>
    <property type="gene ID" value="ENSG00000116396.15"/>
</dbReference>
<dbReference type="Ensembl" id="ENST00000469655.5">
    <molecule id="Q03721-1"/>
    <property type="protein sequence ID" value="ENSP00000436656.1"/>
    <property type="gene ID" value="ENSG00000116396.15"/>
</dbReference>
<dbReference type="GeneID" id="3749"/>
<dbReference type="KEGG" id="hsa:3749"/>
<dbReference type="MANE-Select" id="ENST00000438661.3">
    <molecule id="Q03721-3"/>
    <property type="protein sequence ID" value="ENSP00000393655.2"/>
    <property type="RefSeq nucleotide sequence ID" value="NM_001039574.3"/>
    <property type="RefSeq protein sequence ID" value="NP_001034663.1"/>
</dbReference>
<dbReference type="UCSC" id="uc001dzg.4">
    <molecule id="Q03721-1"/>
    <property type="organism name" value="human"/>
</dbReference>
<dbReference type="AGR" id="HGNC:6236"/>
<dbReference type="CTD" id="3749"/>
<dbReference type="DisGeNET" id="3749"/>
<dbReference type="GeneCards" id="KCNC4"/>
<dbReference type="HGNC" id="HGNC:6236">
    <property type="gene designation" value="KCNC4"/>
</dbReference>
<dbReference type="HPA" id="ENSG00000116396">
    <property type="expression patterns" value="Tissue enhanced (brain)"/>
</dbReference>
<dbReference type="MalaCards" id="KCNC4"/>
<dbReference type="MIM" id="176265">
    <property type="type" value="gene"/>
</dbReference>
<dbReference type="neXtProt" id="NX_Q03721"/>
<dbReference type="OpenTargets" id="ENSG00000116396"/>
<dbReference type="PharmGKB" id="PA30028"/>
<dbReference type="VEuPathDB" id="HostDB:ENSG00000116396"/>
<dbReference type="eggNOG" id="KOG3713">
    <property type="taxonomic scope" value="Eukaryota"/>
</dbReference>
<dbReference type="GeneTree" id="ENSGT00940000158860"/>
<dbReference type="InParanoid" id="Q03721"/>
<dbReference type="OMA" id="RIGANPT"/>
<dbReference type="OrthoDB" id="10025005at2759"/>
<dbReference type="PAN-GO" id="Q03721">
    <property type="GO annotations" value="7 GO annotations based on evolutionary models"/>
</dbReference>
<dbReference type="PhylomeDB" id="Q03721"/>
<dbReference type="TreeFam" id="TF352511"/>
<dbReference type="PathwayCommons" id="Q03721"/>
<dbReference type="Reactome" id="R-HSA-1296072">
    <property type="pathway name" value="Voltage gated Potassium channels"/>
</dbReference>
<dbReference type="SignaLink" id="Q03721"/>
<dbReference type="SIGNOR" id="Q03721"/>
<dbReference type="BioGRID-ORCS" id="3749">
    <property type="hits" value="40 hits in 1158 CRISPR screens"/>
</dbReference>
<dbReference type="ChiTaRS" id="KCNC4">
    <property type="organism name" value="human"/>
</dbReference>
<dbReference type="EvolutionaryTrace" id="Q03721"/>
<dbReference type="GeneWiki" id="KCNC4"/>
<dbReference type="GenomeRNAi" id="3749"/>
<dbReference type="Pharos" id="Q03721">
    <property type="development level" value="Tclin"/>
</dbReference>
<dbReference type="PRO" id="PR:Q03721"/>
<dbReference type="Proteomes" id="UP000005640">
    <property type="component" value="Chromosome 1"/>
</dbReference>
<dbReference type="RNAct" id="Q03721">
    <property type="molecule type" value="protein"/>
</dbReference>
<dbReference type="Bgee" id="ENSG00000116396">
    <property type="expression patterns" value="Expressed in right frontal lobe and 127 other cell types or tissues"/>
</dbReference>
<dbReference type="ExpressionAtlas" id="Q03721">
    <property type="expression patterns" value="baseline and differential"/>
</dbReference>
<dbReference type="GO" id="GO:0043679">
    <property type="term" value="C:axon terminus"/>
    <property type="evidence" value="ECO:0000318"/>
    <property type="project" value="GO_Central"/>
</dbReference>
<dbReference type="GO" id="GO:0032590">
    <property type="term" value="C:dendrite membrane"/>
    <property type="evidence" value="ECO:0000318"/>
    <property type="project" value="GO_Central"/>
</dbReference>
<dbReference type="GO" id="GO:0032809">
    <property type="term" value="C:neuronal cell body membrane"/>
    <property type="evidence" value="ECO:0000318"/>
    <property type="project" value="GO_Central"/>
</dbReference>
<dbReference type="GO" id="GO:0005886">
    <property type="term" value="C:plasma membrane"/>
    <property type="evidence" value="ECO:0000304"/>
    <property type="project" value="Reactome"/>
</dbReference>
<dbReference type="GO" id="GO:0045211">
    <property type="term" value="C:postsynaptic membrane"/>
    <property type="evidence" value="ECO:0000318"/>
    <property type="project" value="GO_Central"/>
</dbReference>
<dbReference type="GO" id="GO:0042734">
    <property type="term" value="C:presynaptic membrane"/>
    <property type="evidence" value="ECO:0000318"/>
    <property type="project" value="GO_Central"/>
</dbReference>
<dbReference type="GO" id="GO:0008076">
    <property type="term" value="C:voltage-gated potassium channel complex"/>
    <property type="evidence" value="ECO:0000318"/>
    <property type="project" value="GO_Central"/>
</dbReference>
<dbReference type="GO" id="GO:0005251">
    <property type="term" value="F:delayed rectifier potassium channel activity"/>
    <property type="evidence" value="ECO:0000318"/>
    <property type="project" value="GO_Central"/>
</dbReference>
<dbReference type="GO" id="GO:0046872">
    <property type="term" value="F:metal ion binding"/>
    <property type="evidence" value="ECO:0007669"/>
    <property type="project" value="UniProtKB-KW"/>
</dbReference>
<dbReference type="GO" id="GO:0005267">
    <property type="term" value="F:potassium channel activity"/>
    <property type="evidence" value="ECO:0000304"/>
    <property type="project" value="ProtInc"/>
</dbReference>
<dbReference type="GO" id="GO:0005249">
    <property type="term" value="F:voltage-gated potassium channel activity"/>
    <property type="evidence" value="ECO:0000314"/>
    <property type="project" value="UniProtKB"/>
</dbReference>
<dbReference type="GO" id="GO:0001508">
    <property type="term" value="P:action potential"/>
    <property type="evidence" value="ECO:0000318"/>
    <property type="project" value="GO_Central"/>
</dbReference>
<dbReference type="GO" id="GO:0007268">
    <property type="term" value="P:chemical synaptic transmission"/>
    <property type="evidence" value="ECO:0000304"/>
    <property type="project" value="ProtInc"/>
</dbReference>
<dbReference type="GO" id="GO:0071805">
    <property type="term" value="P:potassium ion transmembrane transport"/>
    <property type="evidence" value="ECO:0000318"/>
    <property type="project" value="GO_Central"/>
</dbReference>
<dbReference type="GO" id="GO:0006813">
    <property type="term" value="P:potassium ion transport"/>
    <property type="evidence" value="ECO:0000304"/>
    <property type="project" value="ProtInc"/>
</dbReference>
<dbReference type="GO" id="GO:0051260">
    <property type="term" value="P:protein homooligomerization"/>
    <property type="evidence" value="ECO:0007669"/>
    <property type="project" value="InterPro"/>
</dbReference>
<dbReference type="CDD" id="cd18415">
    <property type="entry name" value="BTB_KCNC2_4"/>
    <property type="match status" value="1"/>
</dbReference>
<dbReference type="FunFam" id="1.10.287.70:FF:000011">
    <property type="entry name" value="Potassium channel, voltage-gated Shaw-related subfamily C, member 4"/>
    <property type="match status" value="1"/>
</dbReference>
<dbReference type="FunFam" id="1.20.120.350:FF:000014">
    <property type="entry name" value="Potassium channel, voltage-gated Shaw-related subfamily C, member 4"/>
    <property type="match status" value="1"/>
</dbReference>
<dbReference type="FunFam" id="3.30.710.10:FF:000062">
    <property type="entry name" value="potassium voltage-gated channel subfamily C member 4 isoform X2"/>
    <property type="match status" value="1"/>
</dbReference>
<dbReference type="Gene3D" id="1.10.287.70">
    <property type="match status" value="1"/>
</dbReference>
<dbReference type="Gene3D" id="3.30.710.10">
    <property type="entry name" value="Potassium Channel Kv1.1, Chain A"/>
    <property type="match status" value="1"/>
</dbReference>
<dbReference type="Gene3D" id="1.20.120.350">
    <property type="entry name" value="Voltage-gated potassium channels. Chain C"/>
    <property type="match status" value="1"/>
</dbReference>
<dbReference type="InterPro" id="IPR000210">
    <property type="entry name" value="BTB/POZ_dom"/>
</dbReference>
<dbReference type="InterPro" id="IPR005821">
    <property type="entry name" value="Ion_trans_dom"/>
</dbReference>
<dbReference type="InterPro" id="IPR003968">
    <property type="entry name" value="K_chnl_volt-dep_Kv"/>
</dbReference>
<dbReference type="InterPro" id="IPR003974">
    <property type="entry name" value="K_chnl_volt-dep_Kv3"/>
</dbReference>
<dbReference type="InterPro" id="IPR005405">
    <property type="entry name" value="K_chnl_volt-dep_Kv3.4"/>
</dbReference>
<dbReference type="InterPro" id="IPR021645">
    <property type="entry name" value="Shal-type_N"/>
</dbReference>
<dbReference type="InterPro" id="IPR011333">
    <property type="entry name" value="SKP1/BTB/POZ_sf"/>
</dbReference>
<dbReference type="InterPro" id="IPR003131">
    <property type="entry name" value="T1-type_BTB"/>
</dbReference>
<dbReference type="InterPro" id="IPR028325">
    <property type="entry name" value="VG_K_chnl"/>
</dbReference>
<dbReference type="InterPro" id="IPR027359">
    <property type="entry name" value="Volt_channel_dom_sf"/>
</dbReference>
<dbReference type="PANTHER" id="PTHR11537:SF126">
    <property type="entry name" value="POTASSIUM VOLTAGE-GATED CHANNEL SUBFAMILY C MEMBER 4"/>
    <property type="match status" value="1"/>
</dbReference>
<dbReference type="PANTHER" id="PTHR11537">
    <property type="entry name" value="VOLTAGE-GATED POTASSIUM CHANNEL"/>
    <property type="match status" value="1"/>
</dbReference>
<dbReference type="Pfam" id="PF02214">
    <property type="entry name" value="BTB_2"/>
    <property type="match status" value="1"/>
</dbReference>
<dbReference type="Pfam" id="PF00520">
    <property type="entry name" value="Ion_trans"/>
    <property type="match status" value="1"/>
</dbReference>
<dbReference type="Pfam" id="PF11601">
    <property type="entry name" value="Shal-type"/>
    <property type="match status" value="1"/>
</dbReference>
<dbReference type="PRINTS" id="PR00169">
    <property type="entry name" value="KCHANNEL"/>
</dbReference>
<dbReference type="PRINTS" id="PR01583">
    <property type="entry name" value="KV34CHANNEL"/>
</dbReference>
<dbReference type="PRINTS" id="PR01491">
    <property type="entry name" value="KVCHANNEL"/>
</dbReference>
<dbReference type="PRINTS" id="PR01498">
    <property type="entry name" value="SHAWCHANNEL"/>
</dbReference>
<dbReference type="SMART" id="SM00225">
    <property type="entry name" value="BTB"/>
    <property type="match status" value="1"/>
</dbReference>
<dbReference type="SUPFAM" id="SSF54695">
    <property type="entry name" value="POZ domain"/>
    <property type="match status" value="1"/>
</dbReference>
<dbReference type="SUPFAM" id="SSF81324">
    <property type="entry name" value="Voltage-gated potassium channels"/>
    <property type="match status" value="1"/>
</dbReference>
<sequence length="635" mass="69767">MISSVCVSSYRGRKSGNKPPSKTCLKEEMAKGEASEKIIINVGGTRHETYRSTLRTLPGTRLAWLADPDGGGRPETDGGGVGSSGSSGGGGCEFFFDRHPGVFAYVLNYYRTGKLHCPADVCGPLFEEELTFWGIDETDVEPCCWMTYRQHRDAEEALDIFESPDGGGSGAGPSDEAGDDERELALQRLGPHEGGAGHGAGSGGCRGWQPRMWALFEDPYSSRAARVVAFASLFFILVSITTFCLETHEAFNIDRNVTEILRVGNITSVHFRREVETEPILTYIEGVCVLWFTLEFLVRIVCCPDTLDFVKNLLNIIDFVAILPFYLEVGLSGLSSKAARDVLGFLRVVRFVRILRIFKLTRHFVGLRVLGHTLRASTNEFLLLIIFLALGVLIFATMIYYAERIGARPSDPRGNDHTDFKNIPIGFWWAVVTMTTLGYGDMYPKTWSGMLVGALCALAGVLTIAMPVPVIVNNFGMYYSLAMAKQKLPKKRKKHVPRPAQLESPMYCKSEETSPRDSTCSDTSPPAREEGMIERKRADSKQNGDANAVLSDEEGAGLTQPLASSPTPEERRALRRSTTRDRNKKAAACFLLSTGDYACADGSVRKGTFVLRDLPLQHSPEAACPPTAGTLFLPH</sequence>
<keyword id="KW-0002">3D-structure</keyword>
<keyword id="KW-0025">Alternative splicing</keyword>
<keyword id="KW-0325">Glycoprotein</keyword>
<keyword id="KW-0407">Ion channel</keyword>
<keyword id="KW-0406">Ion transport</keyword>
<keyword id="KW-0472">Membrane</keyword>
<keyword id="KW-0479">Metal-binding</keyword>
<keyword id="KW-0597">Phosphoprotein</keyword>
<keyword id="KW-0630">Potassium</keyword>
<keyword id="KW-0631">Potassium channel</keyword>
<keyword id="KW-0633">Potassium transport</keyword>
<keyword id="KW-1267">Proteomics identification</keyword>
<keyword id="KW-1185">Reference proteome</keyword>
<keyword id="KW-0812">Transmembrane</keyword>
<keyword id="KW-1133">Transmembrane helix</keyword>
<keyword id="KW-0813">Transport</keyword>
<keyword id="KW-0851">Voltage-gated channel</keyword>
<keyword id="KW-0862">Zinc</keyword>
<reference key="1">
    <citation type="journal article" date="1992" name="Proc. R. Soc. B">
        <title>Cloning of ShIII (Shaw-like) cDNAs encoding a novel high-voltage-activating, TEA-sensitive, type-A K+ channel.</title>
        <authorList>
            <person name="de Miera E.V.-S."/>
            <person name="Moreno H."/>
            <person name="Fruhling D."/>
            <person name="Kentros C."/>
            <person name="Rudy B."/>
        </authorList>
    </citation>
    <scope>NUCLEOTIDE SEQUENCE [MRNA] (ISOFORM 2)</scope>
    <source>
        <tissue>Brain</tissue>
    </source>
</reference>
<reference key="2">
    <citation type="journal article" date="2006" name="Nature">
        <title>The DNA sequence and biological annotation of human chromosome 1.</title>
        <authorList>
            <person name="Gregory S.G."/>
            <person name="Barlow K.F."/>
            <person name="McLay K.E."/>
            <person name="Kaul R."/>
            <person name="Swarbreck D."/>
            <person name="Dunham A."/>
            <person name="Scott C.E."/>
            <person name="Howe K.L."/>
            <person name="Woodfine K."/>
            <person name="Spencer C.C.A."/>
            <person name="Jones M.C."/>
            <person name="Gillson C."/>
            <person name="Searle S."/>
            <person name="Zhou Y."/>
            <person name="Kokocinski F."/>
            <person name="McDonald L."/>
            <person name="Evans R."/>
            <person name="Phillips K."/>
            <person name="Atkinson A."/>
            <person name="Cooper R."/>
            <person name="Jones C."/>
            <person name="Hall R.E."/>
            <person name="Andrews T.D."/>
            <person name="Lloyd C."/>
            <person name="Ainscough R."/>
            <person name="Almeida J.P."/>
            <person name="Ambrose K.D."/>
            <person name="Anderson F."/>
            <person name="Andrew R.W."/>
            <person name="Ashwell R.I.S."/>
            <person name="Aubin K."/>
            <person name="Babbage A.K."/>
            <person name="Bagguley C.L."/>
            <person name="Bailey J."/>
            <person name="Beasley H."/>
            <person name="Bethel G."/>
            <person name="Bird C.P."/>
            <person name="Bray-Allen S."/>
            <person name="Brown J.Y."/>
            <person name="Brown A.J."/>
            <person name="Buckley D."/>
            <person name="Burton J."/>
            <person name="Bye J."/>
            <person name="Carder C."/>
            <person name="Chapman J.C."/>
            <person name="Clark S.Y."/>
            <person name="Clarke G."/>
            <person name="Clee C."/>
            <person name="Cobley V."/>
            <person name="Collier R.E."/>
            <person name="Corby N."/>
            <person name="Coville G.J."/>
            <person name="Davies J."/>
            <person name="Deadman R."/>
            <person name="Dunn M."/>
            <person name="Earthrowl M."/>
            <person name="Ellington A.G."/>
            <person name="Errington H."/>
            <person name="Frankish A."/>
            <person name="Frankland J."/>
            <person name="French L."/>
            <person name="Garner P."/>
            <person name="Garnett J."/>
            <person name="Gay L."/>
            <person name="Ghori M.R.J."/>
            <person name="Gibson R."/>
            <person name="Gilby L.M."/>
            <person name="Gillett W."/>
            <person name="Glithero R.J."/>
            <person name="Grafham D.V."/>
            <person name="Griffiths C."/>
            <person name="Griffiths-Jones S."/>
            <person name="Grocock R."/>
            <person name="Hammond S."/>
            <person name="Harrison E.S.I."/>
            <person name="Hart E."/>
            <person name="Haugen E."/>
            <person name="Heath P.D."/>
            <person name="Holmes S."/>
            <person name="Holt K."/>
            <person name="Howden P.J."/>
            <person name="Hunt A.R."/>
            <person name="Hunt S.E."/>
            <person name="Hunter G."/>
            <person name="Isherwood J."/>
            <person name="James R."/>
            <person name="Johnson C."/>
            <person name="Johnson D."/>
            <person name="Joy A."/>
            <person name="Kay M."/>
            <person name="Kershaw J.K."/>
            <person name="Kibukawa M."/>
            <person name="Kimberley A.M."/>
            <person name="King A."/>
            <person name="Knights A.J."/>
            <person name="Lad H."/>
            <person name="Laird G."/>
            <person name="Lawlor S."/>
            <person name="Leongamornlert D.A."/>
            <person name="Lloyd D.M."/>
            <person name="Loveland J."/>
            <person name="Lovell J."/>
            <person name="Lush M.J."/>
            <person name="Lyne R."/>
            <person name="Martin S."/>
            <person name="Mashreghi-Mohammadi M."/>
            <person name="Matthews L."/>
            <person name="Matthews N.S.W."/>
            <person name="McLaren S."/>
            <person name="Milne S."/>
            <person name="Mistry S."/>
            <person name="Moore M.J.F."/>
            <person name="Nickerson T."/>
            <person name="O'Dell C.N."/>
            <person name="Oliver K."/>
            <person name="Palmeiri A."/>
            <person name="Palmer S.A."/>
            <person name="Parker A."/>
            <person name="Patel D."/>
            <person name="Pearce A.V."/>
            <person name="Peck A.I."/>
            <person name="Pelan S."/>
            <person name="Phelps K."/>
            <person name="Phillimore B.J."/>
            <person name="Plumb R."/>
            <person name="Rajan J."/>
            <person name="Raymond C."/>
            <person name="Rouse G."/>
            <person name="Saenphimmachak C."/>
            <person name="Sehra H.K."/>
            <person name="Sheridan E."/>
            <person name="Shownkeen R."/>
            <person name="Sims S."/>
            <person name="Skuce C.D."/>
            <person name="Smith M."/>
            <person name="Steward C."/>
            <person name="Subramanian S."/>
            <person name="Sycamore N."/>
            <person name="Tracey A."/>
            <person name="Tromans A."/>
            <person name="Van Helmond Z."/>
            <person name="Wall M."/>
            <person name="Wallis J.M."/>
            <person name="White S."/>
            <person name="Whitehead S.L."/>
            <person name="Wilkinson J.E."/>
            <person name="Willey D.L."/>
            <person name="Williams H."/>
            <person name="Wilming L."/>
            <person name="Wray P.W."/>
            <person name="Wu Z."/>
            <person name="Coulson A."/>
            <person name="Vaudin M."/>
            <person name="Sulston J.E."/>
            <person name="Durbin R.M."/>
            <person name="Hubbard T."/>
            <person name="Wooster R."/>
            <person name="Dunham I."/>
            <person name="Carter N.P."/>
            <person name="McVean G."/>
            <person name="Ross M.T."/>
            <person name="Harrow J."/>
            <person name="Olson M.V."/>
            <person name="Beck S."/>
            <person name="Rogers J."/>
            <person name="Bentley D.R."/>
        </authorList>
    </citation>
    <scope>NUCLEOTIDE SEQUENCE [LARGE SCALE GENOMIC DNA]</scope>
</reference>
<reference key="3">
    <citation type="journal article" date="2004" name="Genome Res.">
        <title>The status, quality, and expansion of the NIH full-length cDNA project: the Mammalian Gene Collection (MGC).</title>
        <authorList>
            <consortium name="The MGC Project Team"/>
        </authorList>
    </citation>
    <scope>NUCLEOTIDE SEQUENCE [LARGE SCALE MRNA] (ISOFORM 2)</scope>
    <scope>NUCLEOTIDE SEQUENCE [LARGE SCALE MRNA] OF 166-635 (ISOFORM 1)</scope>
    <source>
        <tissue>Brain</tissue>
    </source>
</reference>
<reference key="4">
    <citation type="journal article" date="1994" name="Neuron">
        <title>Elimination of rapid potassium channel inactivation by phosphorylation of the inactivation gate.</title>
        <authorList>
            <person name="Covarrubias M."/>
            <person name="Wei A."/>
            <person name="Salkoff L."/>
            <person name="Vyas T.B."/>
        </authorList>
    </citation>
    <scope>FUNCTION</scope>
    <scope>TRANSPORTER ACTIVITY</scope>
    <scope>PHOSPHORYLATION AT SER-15 AND SER-21</scope>
    <scope>MUTAGENESIS OF SER-15 AND SER-21</scope>
    <scope>DOMAIN</scope>
</reference>
<reference key="5">
    <citation type="journal article" date="1998" name="J. Gen. Physiol.">
        <title>Interactions between multiple phosphorylation sites in the inactivation particle of a K+ channel. Insights into the molecular mechanism of protein kinase C action.</title>
        <authorList>
            <person name="Beck E.J."/>
            <person name="Sorensen R.G."/>
            <person name="Slater S.J."/>
            <person name="Covarrubias M."/>
        </authorList>
    </citation>
    <scope>FUNCTION</scope>
    <scope>TRANSPORTER ACTIVITY</scope>
    <scope>PHOSPHORYLATION AT SER-8 AND SER-9</scope>
    <scope>MUTAGENESIS OF SER-8; SER-9; SER-15 AND SER-21</scope>
</reference>
<reference evidence="14" key="6">
    <citation type="journal article" date="1997" name="Nature">
        <title>NMR structure of inactivation gates from mammalian voltage-dependent potassium channels.</title>
        <authorList>
            <person name="Antz C."/>
            <person name="Geyer M."/>
            <person name="Fakler B."/>
            <person name="Schott M.K."/>
            <person name="Guy H.R."/>
            <person name="Frank R."/>
            <person name="Ruppersberg J.P."/>
            <person name="Kalbitzer H.R."/>
        </authorList>
    </citation>
    <scope>STRUCTURE BY NMR OF 1-30</scope>
</reference>
<reference evidence="12 13" key="7">
    <citation type="journal article" date="1999" name="Nat. Struct. Biol.">
        <title>Control of K+ channel gating by protein phosphorylation: structural switches of the inactivation gate.</title>
        <authorList>
            <person name="Antz C."/>
            <person name="Bauer T."/>
            <person name="Kalbacher H."/>
            <person name="Frank R."/>
            <person name="Covarrubias M."/>
            <person name="Kalbitzer H.R."/>
            <person name="Ruppersberg J.P."/>
            <person name="Baukrowitz T."/>
            <person name="Fakler B."/>
        </authorList>
    </citation>
    <scope>STRUCTURE BY NMR OF 1-30</scope>
</reference>
<evidence type="ECO:0000250" key="1"/>
<evidence type="ECO:0000250" key="2">
    <source>
        <dbReference type="UniProtKB" id="P48547"/>
    </source>
</evidence>
<evidence type="ECO:0000250" key="3">
    <source>
        <dbReference type="UniProtKB" id="Q63734"/>
    </source>
</evidence>
<evidence type="ECO:0000255" key="4"/>
<evidence type="ECO:0000256" key="5">
    <source>
        <dbReference type="SAM" id="MobiDB-lite"/>
    </source>
</evidence>
<evidence type="ECO:0000269" key="6">
    <source>
    </source>
</evidence>
<evidence type="ECO:0000269" key="7">
    <source>
    </source>
</evidence>
<evidence type="ECO:0000303" key="8">
    <source>
    </source>
</evidence>
<evidence type="ECO:0000303" key="9">
    <source>
    </source>
</evidence>
<evidence type="ECO:0000305" key="10"/>
<evidence type="ECO:0000312" key="11">
    <source>
        <dbReference type="HGNC" id="HGNC:6236"/>
    </source>
</evidence>
<evidence type="ECO:0007744" key="12">
    <source>
        <dbReference type="PDB" id="1B4G"/>
    </source>
</evidence>
<evidence type="ECO:0007744" key="13">
    <source>
        <dbReference type="PDB" id="1B4I"/>
    </source>
</evidence>
<evidence type="ECO:0007744" key="14">
    <source>
        <dbReference type="PDB" id="1ZTN"/>
    </source>
</evidence>
<evidence type="ECO:0007829" key="15">
    <source>
        <dbReference type="PDB" id="1B4G"/>
    </source>
</evidence>
<evidence type="ECO:0007829" key="16">
    <source>
        <dbReference type="PDB" id="1B4I"/>
    </source>
</evidence>
<evidence type="ECO:0007829" key="17">
    <source>
        <dbReference type="PDB" id="1ZTN"/>
    </source>
</evidence>
<protein>
    <recommendedName>
        <fullName evidence="10">Voltage-gated potassium channel KCNC4</fullName>
    </recommendedName>
    <alternativeName>
        <fullName evidence="8">KSHIIIC</fullName>
    </alternativeName>
    <alternativeName>
        <fullName>Potassium voltage-gated channel subfamily C member 4</fullName>
    </alternativeName>
    <alternativeName>
        <fullName>Voltage-gated potassium channel subunit Kv3.4</fullName>
    </alternativeName>
</protein>
<organism>
    <name type="scientific">Homo sapiens</name>
    <name type="common">Human</name>
    <dbReference type="NCBI Taxonomy" id="9606"/>
    <lineage>
        <taxon>Eukaryota</taxon>
        <taxon>Metazoa</taxon>
        <taxon>Chordata</taxon>
        <taxon>Craniata</taxon>
        <taxon>Vertebrata</taxon>
        <taxon>Euteleostomi</taxon>
        <taxon>Mammalia</taxon>
        <taxon>Eutheria</taxon>
        <taxon>Euarchontoglires</taxon>
        <taxon>Primates</taxon>
        <taxon>Haplorrhini</taxon>
        <taxon>Catarrhini</taxon>
        <taxon>Hominidae</taxon>
        <taxon>Homo</taxon>
    </lineage>
</organism>
<name>KCNC4_HUMAN</name>
<gene>
    <name evidence="11" type="primary">KCNC4</name>
    <name evidence="11" type="synonym">C1orf30</name>
</gene>
<proteinExistence type="evidence at protein level"/>
<feature type="chain" id="PRO_0000054058" description="Voltage-gated potassium channel KCNC4">
    <location>
        <begin position="1"/>
        <end position="635"/>
    </location>
</feature>
<feature type="topological domain" description="Cytoplasmic" evidence="4">
    <location>
        <begin position="1"/>
        <end position="226"/>
    </location>
</feature>
<feature type="transmembrane region" description="Helical; Name=Segment S1" evidence="4">
    <location>
        <begin position="227"/>
        <end position="247"/>
    </location>
</feature>
<feature type="transmembrane region" description="Helical; Name=Segment S2" evidence="4">
    <location>
        <begin position="278"/>
        <end position="298"/>
    </location>
</feature>
<feature type="topological domain" description="Cytoplasmic" evidence="4">
    <location>
        <begin position="299"/>
        <end position="312"/>
    </location>
</feature>
<feature type="transmembrane region" description="Helical; Name=Segment S3" evidence="4">
    <location>
        <begin position="313"/>
        <end position="333"/>
    </location>
</feature>
<feature type="transmembrane region" description="Helical; Voltage-sensor; Name=Segment S4" evidence="4">
    <location>
        <begin position="345"/>
        <end position="364"/>
    </location>
</feature>
<feature type="topological domain" description="Cytoplasmic" evidence="4">
    <location>
        <begin position="365"/>
        <end position="380"/>
    </location>
</feature>
<feature type="transmembrane region" description="Helical; Name=Segment S5" evidence="4">
    <location>
        <begin position="381"/>
        <end position="401"/>
    </location>
</feature>
<feature type="transmembrane region" description="Helical; Name=Segment S6" evidence="4">
    <location>
        <begin position="452"/>
        <end position="472"/>
    </location>
</feature>
<feature type="topological domain" description="Cytoplasmic" evidence="4">
    <location>
        <begin position="473"/>
        <end position="635"/>
    </location>
</feature>
<feature type="region of interest" description="Inactivation gate">
    <location>
        <begin position="1"/>
        <end position="28"/>
    </location>
</feature>
<feature type="region of interest" description="Disordered" evidence="5">
    <location>
        <begin position="1"/>
        <end position="24"/>
    </location>
</feature>
<feature type="region of interest" description="Disordered" evidence="5">
    <location>
        <begin position="160"/>
        <end position="180"/>
    </location>
</feature>
<feature type="region of interest" description="Disordered" evidence="5">
    <location>
        <begin position="490"/>
        <end position="580"/>
    </location>
</feature>
<feature type="short sequence motif" description="Selectivity filter" evidence="1">
    <location>
        <begin position="436"/>
        <end position="441"/>
    </location>
</feature>
<feature type="compositionally biased region" description="Basic and acidic residues" evidence="5">
    <location>
        <begin position="527"/>
        <end position="542"/>
    </location>
</feature>
<feature type="binding site" evidence="2">
    <location>
        <position position="116"/>
    </location>
    <ligand>
        <name>Zn(2+)</name>
        <dbReference type="ChEBI" id="CHEBI:29105"/>
    </ligand>
</feature>
<feature type="binding site" evidence="2">
    <location>
        <position position="122"/>
    </location>
    <ligand>
        <name>Zn(2+)</name>
        <dbReference type="ChEBI" id="CHEBI:29105"/>
    </ligand>
</feature>
<feature type="binding site" evidence="2">
    <location>
        <position position="143"/>
    </location>
    <ligand>
        <name>Zn(2+)</name>
        <dbReference type="ChEBI" id="CHEBI:29105"/>
    </ligand>
</feature>
<feature type="binding site" evidence="2">
    <location>
        <position position="144"/>
    </location>
    <ligand>
        <name>Zn(2+)</name>
        <dbReference type="ChEBI" id="CHEBI:29105"/>
    </ligand>
</feature>
<feature type="binding site" evidence="2">
    <location>
        <position position="436"/>
    </location>
    <ligand>
        <name>K(+)</name>
        <dbReference type="ChEBI" id="CHEBI:29103"/>
        <note>ligand shared between homotetrameric partners</note>
    </ligand>
</feature>
<feature type="binding site" evidence="2">
    <location>
        <position position="437"/>
    </location>
    <ligand>
        <name>K(+)</name>
        <dbReference type="ChEBI" id="CHEBI:29103"/>
        <note>ligand shared between homotetrameric partners</note>
    </ligand>
</feature>
<feature type="binding site" evidence="2">
    <location>
        <position position="438"/>
    </location>
    <ligand>
        <name>K(+)</name>
        <dbReference type="ChEBI" id="CHEBI:29103"/>
        <note>ligand shared between homotetrameric partners</note>
    </ligand>
</feature>
<feature type="binding site" evidence="2">
    <location>
        <position position="439"/>
    </location>
    <ligand>
        <name>K(+)</name>
        <dbReference type="ChEBI" id="CHEBI:29103"/>
        <note>ligand shared between homotetrameric partners</note>
    </ligand>
</feature>
<feature type="modified residue" description="Phosphoserine" evidence="7">
    <location>
        <position position="8"/>
    </location>
</feature>
<feature type="modified residue" description="Phosphoserine" evidence="7">
    <location>
        <position position="9"/>
    </location>
</feature>
<feature type="modified residue" description="Phosphoserine" evidence="6">
    <location>
        <position position="15"/>
    </location>
</feature>
<feature type="modified residue" description="Phosphoserine" evidence="6">
    <location>
        <position position="21"/>
    </location>
</feature>
<feature type="glycosylation site" description="N-linked (GlcNAc...) asparagine" evidence="4">
    <location>
        <position position="256"/>
    </location>
</feature>
<feature type="glycosylation site" description="N-linked (GlcNAc...) asparagine" evidence="4">
    <location>
        <position position="265"/>
    </location>
</feature>
<feature type="splice variant" id="VSP_020581" description="In isoform 2." evidence="8 9">
    <original>DSKQNGDANAVLSDEEGAGLTQPLASSPTPEERRALRRSTTRDR</original>
    <variation>GEIRGWEGKSLFPQWPREFPNGPQTLGFGMCFVWGFPKHKDVPL</variation>
    <location>
        <begin position="539"/>
        <end position="582"/>
    </location>
</feature>
<feature type="splice variant" id="VSP_020582" description="In isoform 2." evidence="8 9">
    <location>
        <begin position="583"/>
        <end position="635"/>
    </location>
</feature>
<feature type="splice variant" id="VSP_040033" description="In isoform 3." evidence="10">
    <original>GTFVLRDLPLQHSPEAACPPTAGTLFLPH</original>
    <variation>ETCQDALSSNYAQAEVLTLS</variation>
    <location>
        <begin position="607"/>
        <end position="635"/>
    </location>
</feature>
<feature type="sequence variant" id="VAR_034051" description="In dbSNP:rs35167146.">
    <original>D</original>
    <variation>Y</variation>
    <location>
        <position position="318"/>
    </location>
</feature>
<feature type="sequence variant" id="VAR_062185" description="In dbSNP:rs59123361.">
    <original>R</original>
    <variation>Q</variation>
    <location>
        <position position="516"/>
    </location>
</feature>
<feature type="sequence variant" id="VAR_027505" description="In dbSNP:rs12411176.">
    <original>C</original>
    <variation>Y</variation>
    <location>
        <position position="520"/>
    </location>
</feature>
<feature type="mutagenesis site" description="Decreased inhibition of channel closure by PKC. Inhibition of channel closure is nearly abolished; when associated with A-9." evidence="7">
    <original>S</original>
    <variation>A</variation>
    <location>
        <position position="8"/>
    </location>
</feature>
<feature type="mutagenesis site" description="Decreased rate of channel inactivation. Loss of channel inactivation; when associated with D-9; D-15 and D-21." evidence="7">
    <original>S</original>
    <variation>D</variation>
    <location>
        <position position="8"/>
    </location>
</feature>
<feature type="mutagenesis site" description="Strong decrease of inhibition of channel closure by PKC. Inhibition of channel closure is nearly abolished; when associated with A-8." evidence="7">
    <original>S</original>
    <variation>A</variation>
    <location>
        <position position="9"/>
    </location>
</feature>
<feature type="mutagenesis site" description="Decreased rate of channel inactivation. Loss of channel inactivation; when associated with D-8; D-15 and D-21." evidence="7">
    <original>S</original>
    <variation>D</variation>
    <location>
        <position position="9"/>
    </location>
</feature>
<feature type="mutagenesis site" description="Decreased inhibition of channel closure by PKC." evidence="6 7">
    <original>S</original>
    <variation>A</variation>
    <location>
        <position position="15"/>
    </location>
</feature>
<feature type="mutagenesis site" description="Slightly decreased rate of channel inactivation. Loss of channel inactivation; when associated with D-8; D-9 and D-21." evidence="6 7">
    <original>S</original>
    <variation>D</variation>
    <location>
        <position position="15"/>
    </location>
</feature>
<feature type="mutagenesis site" description="Decreased inhibition of channel closure by PKC." evidence="6 7">
    <original>S</original>
    <variation>A</variation>
    <location>
        <position position="21"/>
    </location>
</feature>
<feature type="mutagenesis site" description="Slightly decreased rate of channel inactivation. Loss of channel inactivation; when associated with D-8; D-9 and D-15." evidence="6 7">
    <original>S</original>
    <variation>D</variation>
    <location>
        <position position="21"/>
    </location>
</feature>
<feature type="sequence conflict" description="In Ref. 1; AAA57263." evidence="10" ref="1">
    <original>S</original>
    <variation>T</variation>
    <location>
        <position position="86"/>
    </location>
</feature>
<feature type="sequence conflict" description="In Ref. 1; AAA57263." evidence="10" ref="1">
    <original>F</original>
    <variation>I</variation>
    <location>
        <position position="351"/>
    </location>
</feature>
<feature type="turn" evidence="15">
    <location>
        <begin position="3"/>
        <end position="5"/>
    </location>
</feature>
<feature type="strand" evidence="15">
    <location>
        <begin position="14"/>
        <end position="16"/>
    </location>
</feature>
<feature type="strand" evidence="16">
    <location>
        <begin position="19"/>
        <end position="21"/>
    </location>
</feature>
<feature type="turn" evidence="17">
    <location>
        <begin position="26"/>
        <end position="29"/>
    </location>
</feature>